<comment type="catalytic activity">
    <reaction evidence="1">
        <text>tRNA(Gln) + L-glutamine + ATP = L-glutaminyl-tRNA(Gln) + AMP + diphosphate</text>
        <dbReference type="Rhea" id="RHEA:20121"/>
        <dbReference type="Rhea" id="RHEA-COMP:9662"/>
        <dbReference type="Rhea" id="RHEA-COMP:9681"/>
        <dbReference type="ChEBI" id="CHEBI:30616"/>
        <dbReference type="ChEBI" id="CHEBI:33019"/>
        <dbReference type="ChEBI" id="CHEBI:58359"/>
        <dbReference type="ChEBI" id="CHEBI:78442"/>
        <dbReference type="ChEBI" id="CHEBI:78521"/>
        <dbReference type="ChEBI" id="CHEBI:456215"/>
        <dbReference type="EC" id="6.1.1.18"/>
    </reaction>
</comment>
<comment type="subunit">
    <text evidence="1">Monomer.</text>
</comment>
<comment type="subcellular location">
    <subcellularLocation>
        <location evidence="1">Cytoplasm</location>
    </subcellularLocation>
</comment>
<comment type="similarity">
    <text evidence="1">Belongs to the class-I aminoacyl-tRNA synthetase family.</text>
</comment>
<name>SYQ_ALTMD</name>
<accession>B4RYH7</accession>
<accession>F2GC38</accession>
<reference key="1">
    <citation type="journal article" date="2008" name="ISME J.">
        <title>Comparative genomics of two ecotypes of the marine planktonic copiotroph Alteromonas macleodii suggests alternative lifestyles associated with different kinds of particulate organic matter.</title>
        <authorList>
            <person name="Ivars-Martinez E."/>
            <person name="Martin-Cuadrado A.-B."/>
            <person name="D'Auria G."/>
            <person name="Mira A."/>
            <person name="Ferriera S."/>
            <person name="Johnson J."/>
            <person name="Friedman R."/>
            <person name="Rodriguez-Valera F."/>
        </authorList>
    </citation>
    <scope>NUCLEOTIDE SEQUENCE [LARGE SCALE GENOMIC DNA]</scope>
    <source>
        <strain>DSM 17117 / CIP 110805 / LMG 28347 / Deep ecotype</strain>
    </source>
</reference>
<feature type="chain" id="PRO_1000095477" description="Glutamine--tRNA ligase">
    <location>
        <begin position="1"/>
        <end position="555"/>
    </location>
</feature>
<feature type="short sequence motif" description="'HIGH' region" evidence="1">
    <location>
        <begin position="34"/>
        <end position="44"/>
    </location>
</feature>
<feature type="short sequence motif" description="'KMSKS' region" evidence="1">
    <location>
        <begin position="268"/>
        <end position="272"/>
    </location>
</feature>
<feature type="binding site" evidence="1">
    <location>
        <begin position="35"/>
        <end position="37"/>
    </location>
    <ligand>
        <name>ATP</name>
        <dbReference type="ChEBI" id="CHEBI:30616"/>
    </ligand>
</feature>
<feature type="binding site" evidence="1">
    <location>
        <begin position="41"/>
        <end position="47"/>
    </location>
    <ligand>
        <name>ATP</name>
        <dbReference type="ChEBI" id="CHEBI:30616"/>
    </ligand>
</feature>
<feature type="binding site" evidence="1">
    <location>
        <position position="67"/>
    </location>
    <ligand>
        <name>L-glutamine</name>
        <dbReference type="ChEBI" id="CHEBI:58359"/>
    </ligand>
</feature>
<feature type="binding site" evidence="1">
    <location>
        <position position="212"/>
    </location>
    <ligand>
        <name>L-glutamine</name>
        <dbReference type="ChEBI" id="CHEBI:58359"/>
    </ligand>
</feature>
<feature type="binding site" evidence="1">
    <location>
        <position position="231"/>
    </location>
    <ligand>
        <name>ATP</name>
        <dbReference type="ChEBI" id="CHEBI:30616"/>
    </ligand>
</feature>
<feature type="binding site" evidence="1">
    <location>
        <begin position="261"/>
        <end position="262"/>
    </location>
    <ligand>
        <name>ATP</name>
        <dbReference type="ChEBI" id="CHEBI:30616"/>
    </ligand>
</feature>
<feature type="binding site" evidence="1">
    <location>
        <begin position="269"/>
        <end position="271"/>
    </location>
    <ligand>
        <name>ATP</name>
        <dbReference type="ChEBI" id="CHEBI:30616"/>
    </ligand>
</feature>
<proteinExistence type="inferred from homology"/>
<protein>
    <recommendedName>
        <fullName evidence="1">Glutamine--tRNA ligase</fullName>
        <ecNumber evidence="1">6.1.1.18</ecNumber>
    </recommendedName>
    <alternativeName>
        <fullName evidence="1">Glutaminyl-tRNA synthetase</fullName>
        <shortName evidence="1">GlnRS</shortName>
    </alternativeName>
</protein>
<dbReference type="EC" id="6.1.1.18" evidence="1"/>
<dbReference type="EMBL" id="CP001103">
    <property type="protein sequence ID" value="AEA98054.1"/>
    <property type="molecule type" value="Genomic_DNA"/>
</dbReference>
<dbReference type="RefSeq" id="WP_012518380.1">
    <property type="nucleotide sequence ID" value="NC_011138.3"/>
</dbReference>
<dbReference type="SMR" id="B4RYH7"/>
<dbReference type="KEGG" id="amc:MADE_1009580"/>
<dbReference type="HOGENOM" id="CLU_001882_2_3_6"/>
<dbReference type="Proteomes" id="UP000001870">
    <property type="component" value="Chromosome"/>
</dbReference>
<dbReference type="GO" id="GO:0005829">
    <property type="term" value="C:cytosol"/>
    <property type="evidence" value="ECO:0007669"/>
    <property type="project" value="TreeGrafter"/>
</dbReference>
<dbReference type="GO" id="GO:0005524">
    <property type="term" value="F:ATP binding"/>
    <property type="evidence" value="ECO:0007669"/>
    <property type="project" value="UniProtKB-UniRule"/>
</dbReference>
<dbReference type="GO" id="GO:0004819">
    <property type="term" value="F:glutamine-tRNA ligase activity"/>
    <property type="evidence" value="ECO:0007669"/>
    <property type="project" value="UniProtKB-UniRule"/>
</dbReference>
<dbReference type="GO" id="GO:0006425">
    <property type="term" value="P:glutaminyl-tRNA aminoacylation"/>
    <property type="evidence" value="ECO:0007669"/>
    <property type="project" value="InterPro"/>
</dbReference>
<dbReference type="GO" id="GO:0006424">
    <property type="term" value="P:glutamyl-tRNA aminoacylation"/>
    <property type="evidence" value="ECO:0007669"/>
    <property type="project" value="UniProtKB-UniRule"/>
</dbReference>
<dbReference type="CDD" id="cd00807">
    <property type="entry name" value="GlnRS_core"/>
    <property type="match status" value="1"/>
</dbReference>
<dbReference type="FunFam" id="1.10.1160.10:FF:000001">
    <property type="entry name" value="Glutamine--tRNA ligase"/>
    <property type="match status" value="1"/>
</dbReference>
<dbReference type="FunFam" id="2.40.240.10:FF:000001">
    <property type="entry name" value="Glutamine--tRNA ligase"/>
    <property type="match status" value="1"/>
</dbReference>
<dbReference type="FunFam" id="3.90.800.10:FF:000001">
    <property type="entry name" value="Glutamine--tRNA ligase"/>
    <property type="match status" value="1"/>
</dbReference>
<dbReference type="FunFam" id="3.40.50.620:FF:000037">
    <property type="entry name" value="Glutamine--tRNA ligase cytoplasmic"/>
    <property type="match status" value="1"/>
</dbReference>
<dbReference type="Gene3D" id="1.10.1160.10">
    <property type="entry name" value="Glutamyl-trna Synthetase, Domain 2"/>
    <property type="match status" value="1"/>
</dbReference>
<dbReference type="Gene3D" id="3.90.800.10">
    <property type="entry name" value="Glutamyl-tRNA Synthetase, Domain 3"/>
    <property type="match status" value="1"/>
</dbReference>
<dbReference type="Gene3D" id="3.40.50.620">
    <property type="entry name" value="HUPs"/>
    <property type="match status" value="1"/>
</dbReference>
<dbReference type="Gene3D" id="2.40.240.10">
    <property type="entry name" value="Ribosomal Protein L25, Chain P"/>
    <property type="match status" value="2"/>
</dbReference>
<dbReference type="HAMAP" id="MF_00126">
    <property type="entry name" value="Gln_tRNA_synth"/>
    <property type="match status" value="1"/>
</dbReference>
<dbReference type="InterPro" id="IPR001412">
    <property type="entry name" value="aa-tRNA-synth_I_CS"/>
</dbReference>
<dbReference type="InterPro" id="IPR004514">
    <property type="entry name" value="Gln-tRNA-synth"/>
</dbReference>
<dbReference type="InterPro" id="IPR050132">
    <property type="entry name" value="Gln/Glu-tRNA_Ligase"/>
</dbReference>
<dbReference type="InterPro" id="IPR022861">
    <property type="entry name" value="Gln_tRNA_ligase_bac"/>
</dbReference>
<dbReference type="InterPro" id="IPR000924">
    <property type="entry name" value="Glu/Gln-tRNA-synth"/>
</dbReference>
<dbReference type="InterPro" id="IPR020058">
    <property type="entry name" value="Glu/Gln-tRNA-synth_Ib_cat-dom"/>
</dbReference>
<dbReference type="InterPro" id="IPR020059">
    <property type="entry name" value="Glu/Gln-tRNA-synth_Ib_codon-bd"/>
</dbReference>
<dbReference type="InterPro" id="IPR020061">
    <property type="entry name" value="Glu_tRNA_lig_a-bdl"/>
</dbReference>
<dbReference type="InterPro" id="IPR020056">
    <property type="entry name" value="Rbsml_bL25/Gln-tRNA_synth_N"/>
</dbReference>
<dbReference type="InterPro" id="IPR011035">
    <property type="entry name" value="Ribosomal_bL25/Gln-tRNA_synth"/>
</dbReference>
<dbReference type="InterPro" id="IPR014729">
    <property type="entry name" value="Rossmann-like_a/b/a_fold"/>
</dbReference>
<dbReference type="InterPro" id="IPR049437">
    <property type="entry name" value="tRNA-synt_1c_C2"/>
</dbReference>
<dbReference type="NCBIfam" id="TIGR00440">
    <property type="entry name" value="glnS"/>
    <property type="match status" value="1"/>
</dbReference>
<dbReference type="NCBIfam" id="NF011291">
    <property type="entry name" value="PRK14703.1"/>
    <property type="match status" value="1"/>
</dbReference>
<dbReference type="PANTHER" id="PTHR43097:SF5">
    <property type="entry name" value="GLUTAMATE--TRNA LIGASE"/>
    <property type="match status" value="1"/>
</dbReference>
<dbReference type="PANTHER" id="PTHR43097">
    <property type="entry name" value="GLUTAMINE-TRNA LIGASE"/>
    <property type="match status" value="1"/>
</dbReference>
<dbReference type="Pfam" id="PF00749">
    <property type="entry name" value="tRNA-synt_1c"/>
    <property type="match status" value="1"/>
</dbReference>
<dbReference type="Pfam" id="PF03950">
    <property type="entry name" value="tRNA-synt_1c_C"/>
    <property type="match status" value="1"/>
</dbReference>
<dbReference type="Pfam" id="PF20974">
    <property type="entry name" value="tRNA-synt_1c_C2"/>
    <property type="match status" value="1"/>
</dbReference>
<dbReference type="PRINTS" id="PR00987">
    <property type="entry name" value="TRNASYNTHGLU"/>
</dbReference>
<dbReference type="SUPFAM" id="SSF52374">
    <property type="entry name" value="Nucleotidylyl transferase"/>
    <property type="match status" value="1"/>
</dbReference>
<dbReference type="SUPFAM" id="SSF50715">
    <property type="entry name" value="Ribosomal protein L25-like"/>
    <property type="match status" value="1"/>
</dbReference>
<dbReference type="PROSITE" id="PS00178">
    <property type="entry name" value="AA_TRNA_LIGASE_I"/>
    <property type="match status" value="1"/>
</dbReference>
<organism>
    <name type="scientific">Alteromonas mediterranea (strain DSM 17117 / CIP 110805 / LMG 28347 / Deep ecotype)</name>
    <dbReference type="NCBI Taxonomy" id="1774373"/>
    <lineage>
        <taxon>Bacteria</taxon>
        <taxon>Pseudomonadati</taxon>
        <taxon>Pseudomonadota</taxon>
        <taxon>Gammaproteobacteria</taxon>
        <taxon>Alteromonadales</taxon>
        <taxon>Alteromonadaceae</taxon>
        <taxon>Alteromonas/Salinimonas group</taxon>
        <taxon>Alteromonas</taxon>
    </lineage>
</organism>
<gene>
    <name evidence="1" type="primary">glnS</name>
    <name type="ordered locus">MADE_1009580</name>
</gene>
<sequence>MAETEHRPTNFIRQIIDKDLSNGLHDAIKTRFPPEPNGFLHIGHAKSICLNFGIAEDYTGSCNLRFDDTNPAKEDITFVNSIKEDVTWLGFTWDGEARYSSNYFDQLHAYAVELIEKGLAYVDFSAQDVMREMRGTLKEPGQNSPYRDTDVETNLKEFAKMTAGDYKEGECSLRAKIDMTSPFMCMRDPVIYRVKHAHHHQTGDKWCVYPMYDFTHCISDAIEGITHSLCTLEFQDNRRLYDWVIENISIDCTPRQYEFSRLNLEYTVLSKRRLIQLVEENHVSGWDDPRMPTIAGLRRRGYTPGSIVEFCKRIGVTKMDNMVEMSMLEACIRDDLNANAPRAMAVLDPIKLVIENYEEGKTETLVAPNHPNDESMGTRNIGFSREVYIEAEDFRESANKKFKRLVLEKEVRLRNAYVVKANRVEKDEEGNVTTVYCTYDPDTLGKDPADGRKVKGVIHWVDAATAQAAEFRLYDRLFNVPNPAAEENFTDAINPESLEVKQGWAEAGLIGHVPEVGAWQFERTGYFCVDKDSTDAKPVFNRTVGLRDTWAKIGE</sequence>
<keyword id="KW-0030">Aminoacyl-tRNA synthetase</keyword>
<keyword id="KW-0067">ATP-binding</keyword>
<keyword id="KW-0963">Cytoplasm</keyword>
<keyword id="KW-0436">Ligase</keyword>
<keyword id="KW-0547">Nucleotide-binding</keyword>
<keyword id="KW-0648">Protein biosynthesis</keyword>
<evidence type="ECO:0000255" key="1">
    <source>
        <dbReference type="HAMAP-Rule" id="MF_00126"/>
    </source>
</evidence>